<sequence length="113" mass="12394">MLPTRHRMRTSAHFSTTVRSGARGGRRNVVVSVRLSTGAPSRVGFVVSKAVGNAVTRNKVKRRLRELSAETVRERPEGMDLVVRALPPAATAPWDELARDYRSAVATAVRRCA</sequence>
<keyword id="KW-0255">Endonuclease</keyword>
<keyword id="KW-0378">Hydrolase</keyword>
<keyword id="KW-0540">Nuclease</keyword>
<keyword id="KW-1185">Reference proteome</keyword>
<keyword id="KW-0694">RNA-binding</keyword>
<keyword id="KW-0819">tRNA processing</keyword>
<comment type="function">
    <text evidence="1">RNaseP catalyzes the removal of the 5'-leader sequence from pre-tRNA to produce the mature 5'-terminus. It can also cleave other RNA substrates such as 4.5S RNA. The protein component plays an auxiliary but essential role in vivo by binding to the 5'-leader sequence and broadening the substrate specificity of the ribozyme.</text>
</comment>
<comment type="catalytic activity">
    <reaction evidence="1">
        <text>Endonucleolytic cleavage of RNA, removing 5'-extranucleotides from tRNA precursor.</text>
        <dbReference type="EC" id="3.1.26.5"/>
    </reaction>
</comment>
<comment type="subunit">
    <text evidence="1">Consists of a catalytic RNA component (M1 or rnpB) and a protein subunit.</text>
</comment>
<comment type="similarity">
    <text evidence="1">Belongs to the RnpA family.</text>
</comment>
<evidence type="ECO:0000255" key="1">
    <source>
        <dbReference type="HAMAP-Rule" id="MF_00227"/>
    </source>
</evidence>
<evidence type="ECO:0000256" key="2">
    <source>
        <dbReference type="SAM" id="MobiDB-lite"/>
    </source>
</evidence>
<gene>
    <name evidence="1" type="primary">rnpA</name>
    <name type="ordered locus">KRH_23560</name>
</gene>
<proteinExistence type="inferred from homology"/>
<accession>B2GJF5</accession>
<organism>
    <name type="scientific">Kocuria rhizophila (strain ATCC 9341 / DSM 348 / NBRC 103217 / DC2201)</name>
    <dbReference type="NCBI Taxonomy" id="378753"/>
    <lineage>
        <taxon>Bacteria</taxon>
        <taxon>Bacillati</taxon>
        <taxon>Actinomycetota</taxon>
        <taxon>Actinomycetes</taxon>
        <taxon>Micrococcales</taxon>
        <taxon>Micrococcaceae</taxon>
        <taxon>Kocuria</taxon>
    </lineage>
</organism>
<name>RNPA_KOCRD</name>
<protein>
    <recommendedName>
        <fullName evidence="1">Ribonuclease P protein component</fullName>
        <shortName evidence="1">RNase P protein</shortName>
        <shortName evidence="1">RNaseP protein</shortName>
        <ecNumber evidence="1">3.1.26.5</ecNumber>
    </recommendedName>
    <alternativeName>
        <fullName evidence="1">Protein C5</fullName>
    </alternativeName>
</protein>
<reference key="1">
    <citation type="journal article" date="2008" name="J. Bacteriol.">
        <title>Complete genome sequence of the soil actinomycete Kocuria rhizophila.</title>
        <authorList>
            <person name="Takarada H."/>
            <person name="Sekine M."/>
            <person name="Kosugi H."/>
            <person name="Matsuo Y."/>
            <person name="Fujisawa T."/>
            <person name="Omata S."/>
            <person name="Kishi E."/>
            <person name="Shimizu A."/>
            <person name="Tsukatani N."/>
            <person name="Tanikawa S."/>
            <person name="Fujita N."/>
            <person name="Harayama S."/>
        </authorList>
    </citation>
    <scope>NUCLEOTIDE SEQUENCE [LARGE SCALE GENOMIC DNA]</scope>
    <source>
        <strain>ATCC 9341 / DSM 348 / NBRC 103217 / DC2201</strain>
    </source>
</reference>
<feature type="chain" id="PRO_1000100368" description="Ribonuclease P protein component">
    <location>
        <begin position="1"/>
        <end position="113"/>
    </location>
</feature>
<feature type="region of interest" description="Disordered" evidence="2">
    <location>
        <begin position="1"/>
        <end position="23"/>
    </location>
</feature>
<feature type="compositionally biased region" description="Basic residues" evidence="2">
    <location>
        <begin position="1"/>
        <end position="10"/>
    </location>
</feature>
<dbReference type="EC" id="3.1.26.5" evidence="1"/>
<dbReference type="EMBL" id="AP009152">
    <property type="protein sequence ID" value="BAG30703.1"/>
    <property type="molecule type" value="Genomic_DNA"/>
</dbReference>
<dbReference type="RefSeq" id="WP_012399424.1">
    <property type="nucleotide sequence ID" value="NZ_VECX01000003.1"/>
</dbReference>
<dbReference type="SMR" id="B2GJF5"/>
<dbReference type="STRING" id="378753.KRH_23560"/>
<dbReference type="KEGG" id="krh:KRH_23560"/>
<dbReference type="eggNOG" id="COG0594">
    <property type="taxonomic scope" value="Bacteria"/>
</dbReference>
<dbReference type="HOGENOM" id="CLU_117179_4_1_11"/>
<dbReference type="OrthoDB" id="196964at2"/>
<dbReference type="Proteomes" id="UP000008838">
    <property type="component" value="Chromosome"/>
</dbReference>
<dbReference type="GO" id="GO:0030677">
    <property type="term" value="C:ribonuclease P complex"/>
    <property type="evidence" value="ECO:0007669"/>
    <property type="project" value="TreeGrafter"/>
</dbReference>
<dbReference type="GO" id="GO:0042781">
    <property type="term" value="F:3'-tRNA processing endoribonuclease activity"/>
    <property type="evidence" value="ECO:0007669"/>
    <property type="project" value="TreeGrafter"/>
</dbReference>
<dbReference type="GO" id="GO:0004526">
    <property type="term" value="F:ribonuclease P activity"/>
    <property type="evidence" value="ECO:0007669"/>
    <property type="project" value="UniProtKB-UniRule"/>
</dbReference>
<dbReference type="GO" id="GO:0000049">
    <property type="term" value="F:tRNA binding"/>
    <property type="evidence" value="ECO:0007669"/>
    <property type="project" value="UniProtKB-UniRule"/>
</dbReference>
<dbReference type="GO" id="GO:0001682">
    <property type="term" value="P:tRNA 5'-leader removal"/>
    <property type="evidence" value="ECO:0007669"/>
    <property type="project" value="UniProtKB-UniRule"/>
</dbReference>
<dbReference type="Gene3D" id="3.30.230.10">
    <property type="match status" value="1"/>
</dbReference>
<dbReference type="HAMAP" id="MF_00227">
    <property type="entry name" value="RNase_P"/>
    <property type="match status" value="1"/>
</dbReference>
<dbReference type="InterPro" id="IPR020568">
    <property type="entry name" value="Ribosomal_Su5_D2-typ_SF"/>
</dbReference>
<dbReference type="InterPro" id="IPR014721">
    <property type="entry name" value="Ribsml_uS5_D2-typ_fold_subgr"/>
</dbReference>
<dbReference type="InterPro" id="IPR000100">
    <property type="entry name" value="RNase_P"/>
</dbReference>
<dbReference type="InterPro" id="IPR020539">
    <property type="entry name" value="RNase_P_CS"/>
</dbReference>
<dbReference type="NCBIfam" id="TIGR00188">
    <property type="entry name" value="rnpA"/>
    <property type="match status" value="1"/>
</dbReference>
<dbReference type="PANTHER" id="PTHR33992">
    <property type="entry name" value="RIBONUCLEASE P PROTEIN COMPONENT"/>
    <property type="match status" value="1"/>
</dbReference>
<dbReference type="PANTHER" id="PTHR33992:SF1">
    <property type="entry name" value="RIBONUCLEASE P PROTEIN COMPONENT"/>
    <property type="match status" value="1"/>
</dbReference>
<dbReference type="Pfam" id="PF00825">
    <property type="entry name" value="Ribonuclease_P"/>
    <property type="match status" value="1"/>
</dbReference>
<dbReference type="SUPFAM" id="SSF54211">
    <property type="entry name" value="Ribosomal protein S5 domain 2-like"/>
    <property type="match status" value="1"/>
</dbReference>
<dbReference type="PROSITE" id="PS00648">
    <property type="entry name" value="RIBONUCLEASE_P"/>
    <property type="match status" value="1"/>
</dbReference>